<evidence type="ECO:0000255" key="1">
    <source>
        <dbReference type="HAMAP-Rule" id="MF_00197"/>
    </source>
</evidence>
<comment type="function">
    <text evidence="1">Catalyzes the stereoinversion of LL-2,6-diaminopimelate (L,L-DAP) to meso-diaminopimelate (meso-DAP), a precursor of L-lysine and an essential component of the bacterial peptidoglycan.</text>
</comment>
<comment type="catalytic activity">
    <reaction evidence="1">
        <text>(2S,6S)-2,6-diaminopimelate = meso-2,6-diaminopimelate</text>
        <dbReference type="Rhea" id="RHEA:15393"/>
        <dbReference type="ChEBI" id="CHEBI:57609"/>
        <dbReference type="ChEBI" id="CHEBI:57791"/>
        <dbReference type="EC" id="5.1.1.7"/>
    </reaction>
</comment>
<comment type="pathway">
    <text evidence="1">Amino-acid biosynthesis; L-lysine biosynthesis via DAP pathway; DL-2,6-diaminopimelate from LL-2,6-diaminopimelate: step 1/1.</text>
</comment>
<comment type="subunit">
    <text evidence="1">Homodimer.</text>
</comment>
<comment type="subcellular location">
    <subcellularLocation>
        <location evidence="1">Cytoplasm</location>
    </subcellularLocation>
</comment>
<comment type="similarity">
    <text evidence="1">Belongs to the diaminopimelate epimerase family.</text>
</comment>
<proteinExistence type="inferred from homology"/>
<sequence>MEFVKMHGLGNDFIVVNAMEPPLLDREDWEEIAVRICDRHYGIGGDGLILLFPSDKADIRWRILNSDGSEPEMCGNGIRCLARYVYERGIVAKRRIEVETLAGIIVPEIITDAAGAVTGVCVDMGEPRLQRHQIPMVGPEGPAVNQELVVGDAVVRVTALSMGNPHCLIYVNDIDEAPVTTLGPKVEVHPAFPAKTNVEFVQVVAPDEVQMRVWERGAGPTLACGTGACATVVGSVLNGYTDRKVTVHLAGGPLHIEWREENNRVYMTGPAVEVFRGELPL</sequence>
<organism>
    <name type="scientific">Heliobacterium modesticaldum (strain ATCC 51547 / Ice1)</name>
    <dbReference type="NCBI Taxonomy" id="498761"/>
    <lineage>
        <taxon>Bacteria</taxon>
        <taxon>Bacillati</taxon>
        <taxon>Bacillota</taxon>
        <taxon>Clostridia</taxon>
        <taxon>Eubacteriales</taxon>
        <taxon>Heliobacteriaceae</taxon>
        <taxon>Heliomicrobium</taxon>
    </lineage>
</organism>
<gene>
    <name evidence="1" type="primary">dapF</name>
    <name type="ordered locus">Helmi_20550</name>
    <name type="ORF">HM1_2123</name>
</gene>
<name>DAPF_HELMI</name>
<accession>B0TGR9</accession>
<reference key="1">
    <citation type="journal article" date="2008" name="J. Bacteriol.">
        <title>The genome of Heliobacterium modesticaldum, a phototrophic representative of the Firmicutes containing the simplest photosynthetic apparatus.</title>
        <authorList>
            <person name="Sattley W.M."/>
            <person name="Madigan M.T."/>
            <person name="Swingley W.D."/>
            <person name="Cheung P.C."/>
            <person name="Clocksin K.M."/>
            <person name="Conrad A.L."/>
            <person name="Dejesa L.C."/>
            <person name="Honchak B.M."/>
            <person name="Jung D.O."/>
            <person name="Karbach L.E."/>
            <person name="Kurdoglu A."/>
            <person name="Lahiri S."/>
            <person name="Mastrian S.D."/>
            <person name="Page L.E."/>
            <person name="Taylor H.L."/>
            <person name="Wang Z.T."/>
            <person name="Raymond J."/>
            <person name="Chen M."/>
            <person name="Blankenship R.E."/>
            <person name="Touchman J.W."/>
        </authorList>
    </citation>
    <scope>NUCLEOTIDE SEQUENCE [LARGE SCALE GENOMIC DNA]</scope>
    <source>
        <strain>ATCC 51547 / Ice1</strain>
    </source>
</reference>
<feature type="chain" id="PRO_1000099238" description="Diaminopimelate epimerase">
    <location>
        <begin position="1"/>
        <end position="281"/>
    </location>
</feature>
<feature type="active site" description="Proton donor" evidence="1">
    <location>
        <position position="74"/>
    </location>
</feature>
<feature type="active site" description="Proton acceptor" evidence="1">
    <location>
        <position position="224"/>
    </location>
</feature>
<feature type="binding site" evidence="1">
    <location>
        <position position="11"/>
    </location>
    <ligand>
        <name>substrate</name>
    </ligand>
</feature>
<feature type="binding site" evidence="1">
    <location>
        <position position="65"/>
    </location>
    <ligand>
        <name>substrate</name>
    </ligand>
</feature>
<feature type="binding site" evidence="1">
    <location>
        <begin position="75"/>
        <end position="76"/>
    </location>
    <ligand>
        <name>substrate</name>
    </ligand>
</feature>
<feature type="binding site" evidence="1">
    <location>
        <position position="164"/>
    </location>
    <ligand>
        <name>substrate</name>
    </ligand>
</feature>
<feature type="binding site" evidence="1">
    <location>
        <position position="197"/>
    </location>
    <ligand>
        <name>substrate</name>
    </ligand>
</feature>
<feature type="binding site" evidence="1">
    <location>
        <begin position="215"/>
        <end position="216"/>
    </location>
    <ligand>
        <name>substrate</name>
    </ligand>
</feature>
<feature type="binding site" evidence="1">
    <location>
        <begin position="225"/>
        <end position="226"/>
    </location>
    <ligand>
        <name>substrate</name>
    </ligand>
</feature>
<feature type="site" description="Could be important to modulate the pK values of the two catalytic cysteine residues" evidence="1">
    <location>
        <position position="166"/>
    </location>
</feature>
<feature type="site" description="Could be important to modulate the pK values of the two catalytic cysteine residues" evidence="1">
    <location>
        <position position="215"/>
    </location>
</feature>
<keyword id="KW-0028">Amino-acid biosynthesis</keyword>
<keyword id="KW-0963">Cytoplasm</keyword>
<keyword id="KW-0413">Isomerase</keyword>
<keyword id="KW-0457">Lysine biosynthesis</keyword>
<keyword id="KW-1185">Reference proteome</keyword>
<protein>
    <recommendedName>
        <fullName evidence="1">Diaminopimelate epimerase</fullName>
        <shortName evidence="1">DAP epimerase</shortName>
        <ecNumber evidence="1">5.1.1.7</ecNumber>
    </recommendedName>
    <alternativeName>
        <fullName evidence="1">PLP-independent amino acid racemase</fullName>
    </alternativeName>
</protein>
<dbReference type="EC" id="5.1.1.7" evidence="1"/>
<dbReference type="EMBL" id="CP000930">
    <property type="protein sequence ID" value="ABZ84680.1"/>
    <property type="molecule type" value="Genomic_DNA"/>
</dbReference>
<dbReference type="RefSeq" id="WP_012283180.1">
    <property type="nucleotide sequence ID" value="NC_010337.2"/>
</dbReference>
<dbReference type="SMR" id="B0TGR9"/>
<dbReference type="STRING" id="498761.HM1_2123"/>
<dbReference type="KEGG" id="hmo:HM1_2123"/>
<dbReference type="eggNOG" id="COG0253">
    <property type="taxonomic scope" value="Bacteria"/>
</dbReference>
<dbReference type="HOGENOM" id="CLU_053306_3_0_9"/>
<dbReference type="OrthoDB" id="9805408at2"/>
<dbReference type="UniPathway" id="UPA00034">
    <property type="reaction ID" value="UER00025"/>
</dbReference>
<dbReference type="Proteomes" id="UP000008550">
    <property type="component" value="Chromosome"/>
</dbReference>
<dbReference type="GO" id="GO:0005829">
    <property type="term" value="C:cytosol"/>
    <property type="evidence" value="ECO:0007669"/>
    <property type="project" value="TreeGrafter"/>
</dbReference>
<dbReference type="GO" id="GO:0008837">
    <property type="term" value="F:diaminopimelate epimerase activity"/>
    <property type="evidence" value="ECO:0007669"/>
    <property type="project" value="UniProtKB-UniRule"/>
</dbReference>
<dbReference type="GO" id="GO:0009089">
    <property type="term" value="P:lysine biosynthetic process via diaminopimelate"/>
    <property type="evidence" value="ECO:0007669"/>
    <property type="project" value="UniProtKB-UniRule"/>
</dbReference>
<dbReference type="FunFam" id="3.10.310.10:FF:000001">
    <property type="entry name" value="Diaminopimelate epimerase"/>
    <property type="match status" value="1"/>
</dbReference>
<dbReference type="FunFam" id="3.10.310.10:FF:000004">
    <property type="entry name" value="Diaminopimelate epimerase"/>
    <property type="match status" value="1"/>
</dbReference>
<dbReference type="Gene3D" id="3.10.310.10">
    <property type="entry name" value="Diaminopimelate Epimerase, Chain A, domain 1"/>
    <property type="match status" value="2"/>
</dbReference>
<dbReference type="HAMAP" id="MF_00197">
    <property type="entry name" value="DAP_epimerase"/>
    <property type="match status" value="1"/>
</dbReference>
<dbReference type="InterPro" id="IPR018510">
    <property type="entry name" value="DAP_epimerase_AS"/>
</dbReference>
<dbReference type="InterPro" id="IPR001653">
    <property type="entry name" value="DAP_epimerase_DapF"/>
</dbReference>
<dbReference type="NCBIfam" id="TIGR00652">
    <property type="entry name" value="DapF"/>
    <property type="match status" value="1"/>
</dbReference>
<dbReference type="PANTHER" id="PTHR31689:SF0">
    <property type="entry name" value="DIAMINOPIMELATE EPIMERASE"/>
    <property type="match status" value="1"/>
</dbReference>
<dbReference type="PANTHER" id="PTHR31689">
    <property type="entry name" value="DIAMINOPIMELATE EPIMERASE, CHLOROPLASTIC"/>
    <property type="match status" value="1"/>
</dbReference>
<dbReference type="Pfam" id="PF01678">
    <property type="entry name" value="DAP_epimerase"/>
    <property type="match status" value="2"/>
</dbReference>
<dbReference type="SUPFAM" id="SSF54506">
    <property type="entry name" value="Diaminopimelate epimerase-like"/>
    <property type="match status" value="1"/>
</dbReference>
<dbReference type="PROSITE" id="PS01326">
    <property type="entry name" value="DAP_EPIMERASE"/>
    <property type="match status" value="1"/>
</dbReference>